<organism>
    <name type="scientific">Homo sapiens</name>
    <name type="common">Human</name>
    <dbReference type="NCBI Taxonomy" id="9606"/>
    <lineage>
        <taxon>Eukaryota</taxon>
        <taxon>Metazoa</taxon>
        <taxon>Chordata</taxon>
        <taxon>Craniata</taxon>
        <taxon>Vertebrata</taxon>
        <taxon>Euteleostomi</taxon>
        <taxon>Mammalia</taxon>
        <taxon>Eutheria</taxon>
        <taxon>Euarchontoglires</taxon>
        <taxon>Primates</taxon>
        <taxon>Haplorrhini</taxon>
        <taxon>Catarrhini</taxon>
        <taxon>Hominidae</taxon>
        <taxon>Homo</taxon>
    </lineage>
</organism>
<comment type="function">
    <text evidence="1">Acts as a GTPase-activating protein for RAB35. Together with RAB35 may be involved in regulation of insulin-induced glucose transporter SLC2A4/GLUT4 translocation to the plasma membrane in adipocytes.</text>
</comment>
<comment type="subunit">
    <text evidence="1">Interacts with RAB1A and RAB10; in a GTP-dependent manner.</text>
</comment>
<comment type="interaction">
    <interactant intactId="EBI-12264956">
        <id>Q9NVG8</id>
    </interactant>
    <interactant intactId="EBI-602199">
        <id>Q12774</id>
        <label>ARHGEF5</label>
    </interactant>
    <organismsDiffer>false</organismsDiffer>
    <experiments>6</experiments>
</comment>
<comment type="interaction">
    <interactant intactId="EBI-12264956">
        <id>Q9NVG8</id>
    </interactant>
    <interactant intactId="EBI-725795">
        <id>O60664</id>
        <label>PLIN3</label>
    </interactant>
    <organismsDiffer>false</organismsDiffer>
    <experiments>3</experiments>
</comment>
<comment type="interaction">
    <interactant intactId="EBI-12264956">
        <id>Q9NVG8</id>
    </interactant>
    <interactant intactId="EBI-12047907">
        <id>A6NLX3</id>
        <label>SPDYE4</label>
    </interactant>
    <organismsDiffer>false</organismsDiffer>
    <experiments>3</experiments>
</comment>
<comment type="interaction">
    <interactant intactId="EBI-12264956">
        <id>Q9NVG8</id>
    </interactant>
    <interactant intactId="EBI-11139477">
        <id>Q96N21</id>
        <label>TEPSIN</label>
    </interactant>
    <organismsDiffer>false</organismsDiffer>
    <experiments>3</experiments>
</comment>
<comment type="interaction">
    <interactant intactId="EBI-12264956">
        <id>Q9NVG8</id>
    </interactant>
    <interactant intactId="EBI-6255994">
        <id>Q5T7W0</id>
        <label>ZNF618</label>
    </interactant>
    <organismsDiffer>false</organismsDiffer>
    <experiments>3</experiments>
</comment>
<comment type="subcellular location">
    <subcellularLocation>
        <location evidence="1">Membrane</location>
    </subcellularLocation>
    <subcellularLocation>
        <location evidence="1">Cytoplasm</location>
    </subcellularLocation>
</comment>
<comment type="alternative products">
    <event type="alternative splicing"/>
    <isoform>
        <id>Q9NVG8-1</id>
        <name>1</name>
        <sequence type="displayed"/>
    </isoform>
    <isoform>
        <id>Q9NVG8-2</id>
        <name>2</name>
        <sequence type="described" ref="VSP_039845"/>
    </isoform>
    <isoform>
        <id>Q9NVG8-3</id>
        <name>3</name>
        <sequence type="described" ref="VSP_053994"/>
    </isoform>
</comment>
<proteinExistence type="evidence at protein level"/>
<feature type="chain" id="PRO_0000208038" description="TBC1 domain family member 13">
    <location>
        <begin position="1"/>
        <end position="400"/>
    </location>
</feature>
<feature type="domain" description="Rab-GAP TBC" evidence="2">
    <location>
        <begin position="35"/>
        <end position="345"/>
    </location>
</feature>
<feature type="splice variant" id="VSP_053994" description="In isoform 3." evidence="4">
    <location>
        <begin position="1"/>
        <end position="181"/>
    </location>
</feature>
<feature type="splice variant" id="VSP_039845" description="In isoform 2." evidence="4">
    <location>
        <begin position="182"/>
        <end position="306"/>
    </location>
</feature>
<feature type="sequence variant" id="VAR_070804" description="In dbSNP:rs1572912." evidence="3">
    <original>V</original>
    <variation>A</variation>
    <location>
        <position position="190"/>
    </location>
</feature>
<feature type="sequence conflict" description="In Ref. 5; AAI50312." evidence="5" ref="5">
    <original>P</original>
    <variation>T</variation>
    <location>
        <position position="101"/>
    </location>
</feature>
<feature type="sequence conflict" description="In Ref. 5; AAI50312." evidence="5" ref="5">
    <original>P</original>
    <variation>H</variation>
    <location>
        <position position="223"/>
    </location>
</feature>
<feature type="sequence conflict" description="In Ref. 1; BAA91784." evidence="5" ref="1">
    <original>I</original>
    <variation>T</variation>
    <location>
        <position position="335"/>
    </location>
</feature>
<name>TBC13_HUMAN</name>
<gene>
    <name type="primary">TBC1D13</name>
</gene>
<evidence type="ECO:0000250" key="1">
    <source>
        <dbReference type="UniProtKB" id="Q8R3D1"/>
    </source>
</evidence>
<evidence type="ECO:0000255" key="2">
    <source>
        <dbReference type="PROSITE-ProRule" id="PRU00163"/>
    </source>
</evidence>
<evidence type="ECO:0000269" key="3">
    <source>
    </source>
</evidence>
<evidence type="ECO:0000303" key="4">
    <source>
    </source>
</evidence>
<evidence type="ECO:0000305" key="5"/>
<reference key="1">
    <citation type="journal article" date="2009" name="Genes Cells">
        <title>Identification and characterization of a novel Tre-2/Bub2/Cdc16 (TBC) protein that possesses Rab3A-GAP activity.</title>
        <authorList>
            <person name="Ishibashi K."/>
            <person name="Kanno E."/>
            <person name="Itoh T."/>
            <person name="Fukuda M."/>
        </authorList>
    </citation>
    <scope>NUCLEOTIDE SEQUENCE [MRNA] (ISOFORM 1)</scope>
    <source>
        <tissue>Brain</tissue>
    </source>
</reference>
<reference key="2">
    <citation type="journal article" date="2004" name="Nat. Genet.">
        <title>Complete sequencing and characterization of 21,243 full-length human cDNAs.</title>
        <authorList>
            <person name="Ota T."/>
            <person name="Suzuki Y."/>
            <person name="Nishikawa T."/>
            <person name="Otsuki T."/>
            <person name="Sugiyama T."/>
            <person name="Irie R."/>
            <person name="Wakamatsu A."/>
            <person name="Hayashi K."/>
            <person name="Sato H."/>
            <person name="Nagai K."/>
            <person name="Kimura K."/>
            <person name="Makita H."/>
            <person name="Sekine M."/>
            <person name="Obayashi M."/>
            <person name="Nishi T."/>
            <person name="Shibahara T."/>
            <person name="Tanaka T."/>
            <person name="Ishii S."/>
            <person name="Yamamoto J."/>
            <person name="Saito K."/>
            <person name="Kawai Y."/>
            <person name="Isono Y."/>
            <person name="Nakamura Y."/>
            <person name="Nagahari K."/>
            <person name="Murakami K."/>
            <person name="Yasuda T."/>
            <person name="Iwayanagi T."/>
            <person name="Wagatsuma M."/>
            <person name="Shiratori A."/>
            <person name="Sudo H."/>
            <person name="Hosoiri T."/>
            <person name="Kaku Y."/>
            <person name="Kodaira H."/>
            <person name="Kondo H."/>
            <person name="Sugawara M."/>
            <person name="Takahashi M."/>
            <person name="Kanda K."/>
            <person name="Yokoi T."/>
            <person name="Furuya T."/>
            <person name="Kikkawa E."/>
            <person name="Omura Y."/>
            <person name="Abe K."/>
            <person name="Kamihara K."/>
            <person name="Katsuta N."/>
            <person name="Sato K."/>
            <person name="Tanikawa M."/>
            <person name="Yamazaki M."/>
            <person name="Ninomiya K."/>
            <person name="Ishibashi T."/>
            <person name="Yamashita H."/>
            <person name="Murakawa K."/>
            <person name="Fujimori K."/>
            <person name="Tanai H."/>
            <person name="Kimata M."/>
            <person name="Watanabe M."/>
            <person name="Hiraoka S."/>
            <person name="Chiba Y."/>
            <person name="Ishida S."/>
            <person name="Ono Y."/>
            <person name="Takiguchi S."/>
            <person name="Watanabe S."/>
            <person name="Yosida M."/>
            <person name="Hotuta T."/>
            <person name="Kusano J."/>
            <person name="Kanehori K."/>
            <person name="Takahashi-Fujii A."/>
            <person name="Hara H."/>
            <person name="Tanase T.-O."/>
            <person name="Nomura Y."/>
            <person name="Togiya S."/>
            <person name="Komai F."/>
            <person name="Hara R."/>
            <person name="Takeuchi K."/>
            <person name="Arita M."/>
            <person name="Imose N."/>
            <person name="Musashino K."/>
            <person name="Yuuki H."/>
            <person name="Oshima A."/>
            <person name="Sasaki N."/>
            <person name="Aotsuka S."/>
            <person name="Yoshikawa Y."/>
            <person name="Matsunawa H."/>
            <person name="Ichihara T."/>
            <person name="Shiohata N."/>
            <person name="Sano S."/>
            <person name="Moriya S."/>
            <person name="Momiyama H."/>
            <person name="Satoh N."/>
            <person name="Takami S."/>
            <person name="Terashima Y."/>
            <person name="Suzuki O."/>
            <person name="Nakagawa S."/>
            <person name="Senoh A."/>
            <person name="Mizoguchi H."/>
            <person name="Goto Y."/>
            <person name="Shimizu F."/>
            <person name="Wakebe H."/>
            <person name="Hishigaki H."/>
            <person name="Watanabe T."/>
            <person name="Sugiyama A."/>
            <person name="Takemoto M."/>
            <person name="Kawakami B."/>
            <person name="Yamazaki M."/>
            <person name="Watanabe K."/>
            <person name="Kumagai A."/>
            <person name="Itakura S."/>
            <person name="Fukuzumi Y."/>
            <person name="Fujimori Y."/>
            <person name="Komiyama M."/>
            <person name="Tashiro H."/>
            <person name="Tanigami A."/>
            <person name="Fujiwara T."/>
            <person name="Ono T."/>
            <person name="Yamada K."/>
            <person name="Fujii Y."/>
            <person name="Ozaki K."/>
            <person name="Hirao M."/>
            <person name="Ohmori Y."/>
            <person name="Kawabata A."/>
            <person name="Hikiji T."/>
            <person name="Kobatake N."/>
            <person name="Inagaki H."/>
            <person name="Ikema Y."/>
            <person name="Okamoto S."/>
            <person name="Okitani R."/>
            <person name="Kawakami T."/>
            <person name="Noguchi S."/>
            <person name="Itoh T."/>
            <person name="Shigeta K."/>
            <person name="Senba T."/>
            <person name="Matsumura K."/>
            <person name="Nakajima Y."/>
            <person name="Mizuno T."/>
            <person name="Morinaga M."/>
            <person name="Sasaki M."/>
            <person name="Togashi T."/>
            <person name="Oyama M."/>
            <person name="Hata H."/>
            <person name="Watanabe M."/>
            <person name="Komatsu T."/>
            <person name="Mizushima-Sugano J."/>
            <person name="Satoh T."/>
            <person name="Shirai Y."/>
            <person name="Takahashi Y."/>
            <person name="Nakagawa K."/>
            <person name="Okumura K."/>
            <person name="Nagase T."/>
            <person name="Nomura N."/>
            <person name="Kikuchi H."/>
            <person name="Masuho Y."/>
            <person name="Yamashita R."/>
            <person name="Nakai K."/>
            <person name="Yada T."/>
            <person name="Nakamura Y."/>
            <person name="Ohara O."/>
            <person name="Isogai T."/>
            <person name="Sugano S."/>
        </authorList>
    </citation>
    <scope>NUCLEOTIDE SEQUENCE [LARGE SCALE MRNA] (ISOFORMS 1; 2 AND 3)</scope>
    <source>
        <tissue>Brain</tissue>
    </source>
</reference>
<reference key="3">
    <citation type="journal article" date="2004" name="Nature">
        <title>DNA sequence and analysis of human chromosome 9.</title>
        <authorList>
            <person name="Humphray S.J."/>
            <person name="Oliver K."/>
            <person name="Hunt A.R."/>
            <person name="Plumb R.W."/>
            <person name="Loveland J.E."/>
            <person name="Howe K.L."/>
            <person name="Andrews T.D."/>
            <person name="Searle S."/>
            <person name="Hunt S.E."/>
            <person name="Scott C.E."/>
            <person name="Jones M.C."/>
            <person name="Ainscough R."/>
            <person name="Almeida J.P."/>
            <person name="Ambrose K.D."/>
            <person name="Ashwell R.I.S."/>
            <person name="Babbage A.K."/>
            <person name="Babbage S."/>
            <person name="Bagguley C.L."/>
            <person name="Bailey J."/>
            <person name="Banerjee R."/>
            <person name="Barker D.J."/>
            <person name="Barlow K.F."/>
            <person name="Bates K."/>
            <person name="Beasley H."/>
            <person name="Beasley O."/>
            <person name="Bird C.P."/>
            <person name="Bray-Allen S."/>
            <person name="Brown A.J."/>
            <person name="Brown J.Y."/>
            <person name="Burford D."/>
            <person name="Burrill W."/>
            <person name="Burton J."/>
            <person name="Carder C."/>
            <person name="Carter N.P."/>
            <person name="Chapman J.C."/>
            <person name="Chen Y."/>
            <person name="Clarke G."/>
            <person name="Clark S.Y."/>
            <person name="Clee C.M."/>
            <person name="Clegg S."/>
            <person name="Collier R.E."/>
            <person name="Corby N."/>
            <person name="Crosier M."/>
            <person name="Cummings A.T."/>
            <person name="Davies J."/>
            <person name="Dhami P."/>
            <person name="Dunn M."/>
            <person name="Dutta I."/>
            <person name="Dyer L.W."/>
            <person name="Earthrowl M.E."/>
            <person name="Faulkner L."/>
            <person name="Fleming C.J."/>
            <person name="Frankish A."/>
            <person name="Frankland J.A."/>
            <person name="French L."/>
            <person name="Fricker D.G."/>
            <person name="Garner P."/>
            <person name="Garnett J."/>
            <person name="Ghori J."/>
            <person name="Gilbert J.G.R."/>
            <person name="Glison C."/>
            <person name="Grafham D.V."/>
            <person name="Gribble S."/>
            <person name="Griffiths C."/>
            <person name="Griffiths-Jones S."/>
            <person name="Grocock R."/>
            <person name="Guy J."/>
            <person name="Hall R.E."/>
            <person name="Hammond S."/>
            <person name="Harley J.L."/>
            <person name="Harrison E.S.I."/>
            <person name="Hart E.A."/>
            <person name="Heath P.D."/>
            <person name="Henderson C.D."/>
            <person name="Hopkins B.L."/>
            <person name="Howard P.J."/>
            <person name="Howden P.J."/>
            <person name="Huckle E."/>
            <person name="Johnson C."/>
            <person name="Johnson D."/>
            <person name="Joy A.A."/>
            <person name="Kay M."/>
            <person name="Keenan S."/>
            <person name="Kershaw J.K."/>
            <person name="Kimberley A.M."/>
            <person name="King A."/>
            <person name="Knights A."/>
            <person name="Laird G.K."/>
            <person name="Langford C."/>
            <person name="Lawlor S."/>
            <person name="Leongamornlert D.A."/>
            <person name="Leversha M."/>
            <person name="Lloyd C."/>
            <person name="Lloyd D.M."/>
            <person name="Lovell J."/>
            <person name="Martin S."/>
            <person name="Mashreghi-Mohammadi M."/>
            <person name="Matthews L."/>
            <person name="McLaren S."/>
            <person name="McLay K.E."/>
            <person name="McMurray A."/>
            <person name="Milne S."/>
            <person name="Nickerson T."/>
            <person name="Nisbett J."/>
            <person name="Nordsiek G."/>
            <person name="Pearce A.V."/>
            <person name="Peck A.I."/>
            <person name="Porter K.M."/>
            <person name="Pandian R."/>
            <person name="Pelan S."/>
            <person name="Phillimore B."/>
            <person name="Povey S."/>
            <person name="Ramsey Y."/>
            <person name="Rand V."/>
            <person name="Scharfe M."/>
            <person name="Sehra H.K."/>
            <person name="Shownkeen R."/>
            <person name="Sims S.K."/>
            <person name="Skuce C.D."/>
            <person name="Smith M."/>
            <person name="Steward C.A."/>
            <person name="Swarbreck D."/>
            <person name="Sycamore N."/>
            <person name="Tester J."/>
            <person name="Thorpe A."/>
            <person name="Tracey A."/>
            <person name="Tromans A."/>
            <person name="Thomas D.W."/>
            <person name="Wall M."/>
            <person name="Wallis J.M."/>
            <person name="West A.P."/>
            <person name="Whitehead S.L."/>
            <person name="Willey D.L."/>
            <person name="Williams S.A."/>
            <person name="Wilming L."/>
            <person name="Wray P.W."/>
            <person name="Young L."/>
            <person name="Ashurst J.L."/>
            <person name="Coulson A."/>
            <person name="Blocker H."/>
            <person name="Durbin R.M."/>
            <person name="Sulston J.E."/>
            <person name="Hubbard T."/>
            <person name="Jackson M.J."/>
            <person name="Bentley D.R."/>
            <person name="Beck S."/>
            <person name="Rogers J."/>
            <person name="Dunham I."/>
        </authorList>
    </citation>
    <scope>NUCLEOTIDE SEQUENCE [LARGE SCALE GENOMIC DNA]</scope>
</reference>
<reference key="4">
    <citation type="submission" date="2005-07" db="EMBL/GenBank/DDBJ databases">
        <authorList>
            <person name="Mural R.J."/>
            <person name="Istrail S."/>
            <person name="Sutton G.G."/>
            <person name="Florea L."/>
            <person name="Halpern A.L."/>
            <person name="Mobarry C.M."/>
            <person name="Lippert R."/>
            <person name="Walenz B."/>
            <person name="Shatkay H."/>
            <person name="Dew I."/>
            <person name="Miller J.R."/>
            <person name="Flanigan M.J."/>
            <person name="Edwards N.J."/>
            <person name="Bolanos R."/>
            <person name="Fasulo D."/>
            <person name="Halldorsson B.V."/>
            <person name="Hannenhalli S."/>
            <person name="Turner R."/>
            <person name="Yooseph S."/>
            <person name="Lu F."/>
            <person name="Nusskern D.R."/>
            <person name="Shue B.C."/>
            <person name="Zheng X.H."/>
            <person name="Zhong F."/>
            <person name="Delcher A.L."/>
            <person name="Huson D.H."/>
            <person name="Kravitz S.A."/>
            <person name="Mouchard L."/>
            <person name="Reinert K."/>
            <person name="Remington K.A."/>
            <person name="Clark A.G."/>
            <person name="Waterman M.S."/>
            <person name="Eichler E.E."/>
            <person name="Adams M.D."/>
            <person name="Hunkapiller M.W."/>
            <person name="Myers E.W."/>
            <person name="Venter J.C."/>
        </authorList>
    </citation>
    <scope>NUCLEOTIDE SEQUENCE [LARGE SCALE GENOMIC DNA]</scope>
</reference>
<reference key="5">
    <citation type="journal article" date="2004" name="Genome Res.">
        <title>The status, quality, and expansion of the NIH full-length cDNA project: the Mammalian Gene Collection (MGC).</title>
        <authorList>
            <consortium name="The MGC Project Team"/>
        </authorList>
    </citation>
    <scope>NUCLEOTIDE SEQUENCE [LARGE SCALE MRNA] (ISOFORM 1)</scope>
    <scope>VARIANT ALA-190</scope>
    <source>
        <tissue>Brain</tissue>
        <tissue>Testis</tissue>
    </source>
</reference>
<reference key="6">
    <citation type="journal article" date="2011" name="BMC Syst. Biol.">
        <title>Initial characterization of the human central proteome.</title>
        <authorList>
            <person name="Burkard T.R."/>
            <person name="Planyavsky M."/>
            <person name="Kaupe I."/>
            <person name="Breitwieser F.P."/>
            <person name="Buerckstuemmer T."/>
            <person name="Bennett K.L."/>
            <person name="Superti-Furga G."/>
            <person name="Colinge J."/>
        </authorList>
    </citation>
    <scope>IDENTIFICATION BY MASS SPECTROMETRY [LARGE SCALE ANALYSIS]</scope>
</reference>
<keyword id="KW-0025">Alternative splicing</keyword>
<keyword id="KW-0963">Cytoplasm</keyword>
<keyword id="KW-0343">GTPase activation</keyword>
<keyword id="KW-0472">Membrane</keyword>
<keyword id="KW-1267">Proteomics identification</keyword>
<keyword id="KW-1185">Reference proteome</keyword>
<protein>
    <recommendedName>
        <fullName>TBC1 domain family member 13</fullName>
    </recommendedName>
</protein>
<sequence length="400" mass="46554">MSSLHKSRIADFQDVLKEPSIALEKLRELSFSGIPCEGGLRCLCWKILLNYLPLERASWTSILAKQRELYAQFLREMIIQPGIAKANMGVSREDVTFEDHPLNPNPDSRWNTYFKDNEVLLQIDKDVRRLCPDISFFQRATDYPCLLILDPQNEFETLRKRVEQTTLKSQTVARNRSGVTNMSSPHKNSVPSSLNEYEVLPNGCEAHWEVVERILFIYAKLNPGIAYVQGMNEIVGPLYYTFATDPNSEWKEHAEADTFFCFTNLMAEIRDNFIKSLDDSQCGITYKMEKVYSTLKDKDVELYLKLQEQNIKPQFFAFRWLTLLLSQEFLLPDVIRIWDSLFADDNRFDFLLLVCCAMLMLIREQLLEGDFTVNMRLLQDYPITDVCQILQKAKELQDSK</sequence>
<accession>Q9NVG8</accession>
<accession>A7E2E7</accession>
<accession>B3KW04</accession>
<accession>B9EGJ8</accession>
<accession>Q5T270</accession>
<accession>Q5T271</accession>
<dbReference type="EMBL" id="AB449899">
    <property type="protein sequence ID" value="BAH16642.1"/>
    <property type="molecule type" value="mRNA"/>
</dbReference>
<dbReference type="EMBL" id="AK001605">
    <property type="protein sequence ID" value="BAA91784.1"/>
    <property type="molecule type" value="mRNA"/>
</dbReference>
<dbReference type="EMBL" id="AK123828">
    <property type="protein sequence ID" value="BAG53966.1"/>
    <property type="molecule type" value="mRNA"/>
</dbReference>
<dbReference type="EMBL" id="AK289777">
    <property type="protein sequence ID" value="BAF82466.1"/>
    <property type="molecule type" value="mRNA"/>
</dbReference>
<dbReference type="EMBL" id="AL441992">
    <property type="status" value="NOT_ANNOTATED_CDS"/>
    <property type="molecule type" value="Genomic_DNA"/>
</dbReference>
<dbReference type="EMBL" id="CH471090">
    <property type="protein sequence ID" value="EAW87832.1"/>
    <property type="molecule type" value="Genomic_DNA"/>
</dbReference>
<dbReference type="EMBL" id="CH471090">
    <property type="protein sequence ID" value="EAW87833.1"/>
    <property type="molecule type" value="Genomic_DNA"/>
</dbReference>
<dbReference type="EMBL" id="CH471090">
    <property type="protein sequence ID" value="EAW87835.1"/>
    <property type="molecule type" value="Genomic_DNA"/>
</dbReference>
<dbReference type="EMBL" id="BC132817">
    <property type="protein sequence ID" value="AAI32818.1"/>
    <property type="molecule type" value="mRNA"/>
</dbReference>
<dbReference type="EMBL" id="BC136509">
    <property type="protein sequence ID" value="AAI36510.1"/>
    <property type="molecule type" value="mRNA"/>
</dbReference>
<dbReference type="EMBL" id="BC150311">
    <property type="protein sequence ID" value="AAI50312.1"/>
    <property type="molecule type" value="mRNA"/>
</dbReference>
<dbReference type="CCDS" id="CCDS6911.1">
    <molecule id="Q9NVG8-1"/>
</dbReference>
<dbReference type="CCDS" id="CCDS69677.1">
    <molecule id="Q9NVG8-2"/>
</dbReference>
<dbReference type="RefSeq" id="NP_001273701.1">
    <molecule id="Q9NVG8-2"/>
    <property type="nucleotide sequence ID" value="NM_001286772.2"/>
</dbReference>
<dbReference type="RefSeq" id="NP_060671.3">
    <molecule id="Q9NVG8-1"/>
    <property type="nucleotide sequence ID" value="NM_018201.4"/>
</dbReference>
<dbReference type="SMR" id="Q9NVG8"/>
<dbReference type="BioGRID" id="120091">
    <property type="interactions" value="13"/>
</dbReference>
<dbReference type="FunCoup" id="Q9NVG8">
    <property type="interactions" value="1843"/>
</dbReference>
<dbReference type="IntAct" id="Q9NVG8">
    <property type="interactions" value="6"/>
</dbReference>
<dbReference type="STRING" id="9606.ENSP00000361731"/>
<dbReference type="GlyGen" id="Q9NVG8">
    <property type="glycosylation" value="1 site, 1 O-linked glycan (1 site)"/>
</dbReference>
<dbReference type="iPTMnet" id="Q9NVG8"/>
<dbReference type="PhosphoSitePlus" id="Q9NVG8"/>
<dbReference type="BioMuta" id="TBC1D13"/>
<dbReference type="DMDM" id="308153549"/>
<dbReference type="jPOST" id="Q9NVG8"/>
<dbReference type="MassIVE" id="Q9NVG8"/>
<dbReference type="PaxDb" id="9606-ENSP00000361731"/>
<dbReference type="PeptideAtlas" id="Q9NVG8"/>
<dbReference type="ProteomicsDB" id="3773"/>
<dbReference type="ProteomicsDB" id="82793">
    <molecule id="Q9NVG8-1"/>
</dbReference>
<dbReference type="ProteomicsDB" id="82794">
    <molecule id="Q9NVG8-2"/>
</dbReference>
<dbReference type="Pumba" id="Q9NVG8"/>
<dbReference type="Antibodypedia" id="31273">
    <property type="antibodies" value="139 antibodies from 19 providers"/>
</dbReference>
<dbReference type="DNASU" id="54662"/>
<dbReference type="Ensembl" id="ENST00000223865.8">
    <molecule id="Q9NVG8-2"/>
    <property type="protein sequence ID" value="ENSP00000223865.8"/>
    <property type="gene ID" value="ENSG00000107021.16"/>
</dbReference>
<dbReference type="Ensembl" id="ENST00000372648.10">
    <molecule id="Q9NVG8-1"/>
    <property type="protein sequence ID" value="ENSP00000361731.5"/>
    <property type="gene ID" value="ENSG00000107021.16"/>
</dbReference>
<dbReference type="GeneID" id="54662"/>
<dbReference type="KEGG" id="hsa:54662"/>
<dbReference type="MANE-Select" id="ENST00000372648.10">
    <property type="protein sequence ID" value="ENSP00000361731.5"/>
    <property type="RefSeq nucleotide sequence ID" value="NM_018201.5"/>
    <property type="RefSeq protein sequence ID" value="NP_060671.3"/>
</dbReference>
<dbReference type="UCSC" id="uc010myj.5">
    <molecule id="Q9NVG8-1"/>
    <property type="organism name" value="human"/>
</dbReference>
<dbReference type="AGR" id="HGNC:25571"/>
<dbReference type="CTD" id="54662"/>
<dbReference type="DisGeNET" id="54662"/>
<dbReference type="GeneCards" id="TBC1D13"/>
<dbReference type="HGNC" id="HGNC:25571">
    <property type="gene designation" value="TBC1D13"/>
</dbReference>
<dbReference type="HPA" id="ENSG00000107021">
    <property type="expression patterns" value="Low tissue specificity"/>
</dbReference>
<dbReference type="MIM" id="616218">
    <property type="type" value="gene"/>
</dbReference>
<dbReference type="neXtProt" id="NX_Q9NVG8"/>
<dbReference type="OpenTargets" id="ENSG00000107021"/>
<dbReference type="PharmGKB" id="PA134898118"/>
<dbReference type="VEuPathDB" id="HostDB:ENSG00000107021"/>
<dbReference type="eggNOG" id="KOG4567">
    <property type="taxonomic scope" value="Eukaryota"/>
</dbReference>
<dbReference type="GeneTree" id="ENSGT00940000158674"/>
<dbReference type="HOGENOM" id="CLU_018687_0_0_1"/>
<dbReference type="InParanoid" id="Q9NVG8"/>
<dbReference type="OMA" id="TEFPCEE"/>
<dbReference type="OrthoDB" id="10263206at2759"/>
<dbReference type="PAN-GO" id="Q9NVG8">
    <property type="GO annotations" value="3 GO annotations based on evolutionary models"/>
</dbReference>
<dbReference type="PhylomeDB" id="Q9NVG8"/>
<dbReference type="TreeFam" id="TF105911"/>
<dbReference type="PathwayCommons" id="Q9NVG8"/>
<dbReference type="Reactome" id="R-HSA-8854214">
    <property type="pathway name" value="TBC/RABGAPs"/>
</dbReference>
<dbReference type="SignaLink" id="Q9NVG8"/>
<dbReference type="BioGRID-ORCS" id="54662">
    <property type="hits" value="12 hits in 1152 CRISPR screens"/>
</dbReference>
<dbReference type="ChiTaRS" id="TBC1D13">
    <property type="organism name" value="human"/>
</dbReference>
<dbReference type="GenomeRNAi" id="54662"/>
<dbReference type="Pharos" id="Q9NVG8">
    <property type="development level" value="Tdark"/>
</dbReference>
<dbReference type="PRO" id="PR:Q9NVG8"/>
<dbReference type="Proteomes" id="UP000005640">
    <property type="component" value="Chromosome 9"/>
</dbReference>
<dbReference type="RNAct" id="Q9NVG8">
    <property type="molecule type" value="protein"/>
</dbReference>
<dbReference type="Bgee" id="ENSG00000107021">
    <property type="expression patterns" value="Expressed in anterior cingulate cortex and 174 other cell types or tissues"/>
</dbReference>
<dbReference type="ExpressionAtlas" id="Q9NVG8">
    <property type="expression patterns" value="baseline and differential"/>
</dbReference>
<dbReference type="GO" id="GO:0005737">
    <property type="term" value="C:cytoplasm"/>
    <property type="evidence" value="ECO:0000318"/>
    <property type="project" value="GO_Central"/>
</dbReference>
<dbReference type="GO" id="GO:0005829">
    <property type="term" value="C:cytosol"/>
    <property type="evidence" value="ECO:0007669"/>
    <property type="project" value="Ensembl"/>
</dbReference>
<dbReference type="GO" id="GO:0016020">
    <property type="term" value="C:membrane"/>
    <property type="evidence" value="ECO:0007669"/>
    <property type="project" value="UniProtKB-SubCell"/>
</dbReference>
<dbReference type="GO" id="GO:0005096">
    <property type="term" value="F:GTPase activator activity"/>
    <property type="evidence" value="ECO:0000318"/>
    <property type="project" value="GO_Central"/>
</dbReference>
<dbReference type="GO" id="GO:0031267">
    <property type="term" value="F:small GTPase binding"/>
    <property type="evidence" value="ECO:0007669"/>
    <property type="project" value="Ensembl"/>
</dbReference>
<dbReference type="GO" id="GO:0006886">
    <property type="term" value="P:intracellular protein transport"/>
    <property type="evidence" value="ECO:0000318"/>
    <property type="project" value="GO_Central"/>
</dbReference>
<dbReference type="FunFam" id="1.10.472.80:FF:000009">
    <property type="entry name" value="TBC1 domain family member 13"/>
    <property type="match status" value="1"/>
</dbReference>
<dbReference type="FunFam" id="1.10.8.270:FF:000019">
    <property type="entry name" value="TBC1 domain family member 13"/>
    <property type="match status" value="1"/>
</dbReference>
<dbReference type="Gene3D" id="1.10.8.270">
    <property type="entry name" value="putative rabgap domain of human tbc1 domain family member 14 like domains"/>
    <property type="match status" value="1"/>
</dbReference>
<dbReference type="Gene3D" id="1.10.472.80">
    <property type="entry name" value="Ypt/Rab-GAP domain of gyp1p, domain 3"/>
    <property type="match status" value="1"/>
</dbReference>
<dbReference type="InterPro" id="IPR000195">
    <property type="entry name" value="Rab-GAP-TBC_dom"/>
</dbReference>
<dbReference type="InterPro" id="IPR035969">
    <property type="entry name" value="Rab-GAP_TBC_sf"/>
</dbReference>
<dbReference type="PANTHER" id="PTHR22957:SF27">
    <property type="entry name" value="TBC1 DOMAIN FAMILY MEMBER 13"/>
    <property type="match status" value="1"/>
</dbReference>
<dbReference type="PANTHER" id="PTHR22957">
    <property type="entry name" value="TBC1 DOMAIN FAMILY MEMBER GTPASE-ACTIVATING PROTEIN"/>
    <property type="match status" value="1"/>
</dbReference>
<dbReference type="Pfam" id="PF00566">
    <property type="entry name" value="RabGAP-TBC"/>
    <property type="match status" value="1"/>
</dbReference>
<dbReference type="SMART" id="SM00164">
    <property type="entry name" value="TBC"/>
    <property type="match status" value="1"/>
</dbReference>
<dbReference type="SUPFAM" id="SSF47923">
    <property type="entry name" value="Ypt/Rab-GAP domain of gyp1p"/>
    <property type="match status" value="2"/>
</dbReference>
<dbReference type="PROSITE" id="PS50086">
    <property type="entry name" value="TBC_RABGAP"/>
    <property type="match status" value="1"/>
</dbReference>